<organism>
    <name type="scientific">Prochlorococcus marinus (strain SARG / CCMP1375 / SS120)</name>
    <dbReference type="NCBI Taxonomy" id="167539"/>
    <lineage>
        <taxon>Bacteria</taxon>
        <taxon>Bacillati</taxon>
        <taxon>Cyanobacteriota</taxon>
        <taxon>Cyanophyceae</taxon>
        <taxon>Synechococcales</taxon>
        <taxon>Prochlorococcaceae</taxon>
        <taxon>Prochlorococcus</taxon>
    </lineage>
</organism>
<accession>Q9L4N4</accession>
<gene>
    <name evidence="2" type="primary">psaA</name>
    <name type="ordered locus">Pro_1672</name>
</gene>
<protein>
    <recommendedName>
        <fullName evidence="2">Photosystem I P700 chlorophyll a apoprotein A1</fullName>
        <ecNumber evidence="2">1.97.1.12</ecNumber>
    </recommendedName>
    <alternativeName>
        <fullName evidence="2">PsaA</fullName>
    </alternativeName>
</protein>
<sequence>MTISPPERGEKAKGAAPTPYDQPVDRDHAPIDYEKLNKPGFWSSKLSKGPKTTTWIWNLHADAHDFDTHLGDLEETSRKIFSAHFGHLAVVFIWMSAAFFHGARFSNYTGWLADPTNVKPGAQVVWPVVGQEILNADLGGNYQGLQITSGIFQMWRAWGITSEVQLMALAIGGVIMAALMLHGGIYHYHKAAPKLEWFRKIEPMLQHHQIALIGLGSIAWAGHLIHIGAPVAALLDAIDAGNPLVVDGVSIASAADVTNLAPRLCDPAVASQIFPSLAGRTVENFFTLNWWAFTDILTNKGGLNPVTGSLWMTDISHHHLAFGVFAIFGGHMWRNNVHGVGHSMKEIMDVHKGDPILFPAPKGHQGIFEFLSNSWHGQLSINLAMVGSASIVVAHHMYALPPYPYIAIDYPTVLGLFTHHMWIGGLFICGAAAHAGIAMIRDYDPAVHIDNVLDRILKARDAIISHLNWVCMWLGFHSFGLYIHNDVMRALGRPKDMFSDTGIQLQPFLAQWVQNLQQSAVGTGDLVGAGNLPGSVLSEVFNGNVVEVGGKVAIAPIPLGTADLMIHHVHAFTIHVTLLILLKGVLYARSSRLIPDKAQLGFRFPCDGPGRGGTCQVSSWDHVFLGLFWMYNSLSVVIFHFSWKMQSDVWGLTGGNFAQSSITINGWLRDFLWAQSSQVLTSYGQPISMYGLMFLGAHFVWAFSLMFLFSGRGYWQELFESIIWAHNKLKVAPTIQPRALSITQGRAVGVAHFLLGGIATTWAFFHARLIGLG</sequence>
<comment type="function">
    <text evidence="2">PsaA and PsaB bind P700, the primary electron donor of photosystem I (PSI), as well as the electron acceptors A0, A1 and FX. PSI is a plastocyanin/cytochrome c6-ferredoxin oxidoreductase, converting photonic excitation into a charge separation, which transfers an electron from the donor P700 chlorophyll pair to the spectroscopically characterized acceptors A0, A1, FX, FA and FB in turn. Oxidized P700 is reduced on the lumenal side of the thylakoid membrane by plastocyanin or cytochrome c6.</text>
</comment>
<comment type="catalytic activity">
    <reaction evidence="2">
        <text>reduced [plastocyanin] + hnu + oxidized [2Fe-2S]-[ferredoxin] = oxidized [plastocyanin] + reduced [2Fe-2S]-[ferredoxin]</text>
        <dbReference type="Rhea" id="RHEA:30407"/>
        <dbReference type="Rhea" id="RHEA-COMP:10000"/>
        <dbReference type="Rhea" id="RHEA-COMP:10001"/>
        <dbReference type="Rhea" id="RHEA-COMP:10039"/>
        <dbReference type="Rhea" id="RHEA-COMP:10040"/>
        <dbReference type="ChEBI" id="CHEBI:29036"/>
        <dbReference type="ChEBI" id="CHEBI:30212"/>
        <dbReference type="ChEBI" id="CHEBI:33737"/>
        <dbReference type="ChEBI" id="CHEBI:33738"/>
        <dbReference type="ChEBI" id="CHEBI:49552"/>
        <dbReference type="EC" id="1.97.1.12"/>
    </reaction>
</comment>
<comment type="cofactor">
    <text evidence="1">PSI electron transfer chain: 5 divinyl chlorophyll a, 1 divinyl chlorophyll a', 2 phylloquinones and 3 4Fe-4S clusters. PSI core antenna: 90 divinyl chlorophyll a, 22 carotenoids, 3 phospholipids and 1 galactolipid. P700 is a divinyl chlorophyll a/divinyl chlorophyll a' dimer, A0 is one or more divinylchlorophyll a, A1 is one or both phylloquinones and FX is a shared 4Fe-4S iron-sulfur center.</text>
</comment>
<comment type="subunit">
    <text evidence="2">The PsaA/B heterodimer binds the P700 divinyl chlorophyll special pair and subsequent electron acceptors. PSI consists of a core antenna complex that captures photons, and an electron transfer chain that converts photonic excitation into a charge separation. The cyanobacterial PSI reaction center is composed of one copy each of PsaA,B,C,D,E,F,I,J,K,L,M and X, and forms trimeric complexes.</text>
</comment>
<comment type="subcellular location">
    <subcellularLocation>
        <location evidence="2">Cellular thylakoid membrane</location>
        <topology evidence="2">Multi-pass membrane protein</topology>
    </subcellularLocation>
</comment>
<comment type="induction">
    <text evidence="4">Transcription decreases upon iron starvation.</text>
</comment>
<comment type="similarity">
    <text evidence="2">Belongs to the PsaA/PsaB family.</text>
</comment>
<keyword id="KW-0004">4Fe-4S</keyword>
<keyword id="KW-0148">Chlorophyll</keyword>
<keyword id="KW-0157">Chromophore</keyword>
<keyword id="KW-0249">Electron transport</keyword>
<keyword id="KW-0408">Iron</keyword>
<keyword id="KW-0411">Iron-sulfur</keyword>
<keyword id="KW-0460">Magnesium</keyword>
<keyword id="KW-0472">Membrane</keyword>
<keyword id="KW-0479">Metal-binding</keyword>
<keyword id="KW-0560">Oxidoreductase</keyword>
<keyword id="KW-0602">Photosynthesis</keyword>
<keyword id="KW-0603">Photosystem I</keyword>
<keyword id="KW-1185">Reference proteome</keyword>
<keyword id="KW-0793">Thylakoid</keyword>
<keyword id="KW-0812">Transmembrane</keyword>
<keyword id="KW-1133">Transmembrane helix</keyword>
<keyword id="KW-0813">Transport</keyword>
<feature type="chain" id="PRO_0000088588" description="Photosystem I P700 chlorophyll a apoprotein A1">
    <location>
        <begin position="1"/>
        <end position="773"/>
    </location>
</feature>
<feature type="transmembrane region" description="Helical; Name=I" evidence="2">
    <location>
        <begin position="80"/>
        <end position="103"/>
    </location>
</feature>
<feature type="transmembrane region" description="Helical; Name=II" evidence="2">
    <location>
        <begin position="166"/>
        <end position="189"/>
    </location>
</feature>
<feature type="transmembrane region" description="Helical; Name=III" evidence="2">
    <location>
        <begin position="205"/>
        <end position="229"/>
    </location>
</feature>
<feature type="transmembrane region" description="Helical; Name=IV" evidence="2">
    <location>
        <begin position="315"/>
        <end position="333"/>
    </location>
</feature>
<feature type="transmembrane region" description="Helical; Name=V" evidence="2">
    <location>
        <begin position="375"/>
        <end position="398"/>
    </location>
</feature>
<feature type="transmembrane region" description="Helical; Name=VI" evidence="2">
    <location>
        <begin position="414"/>
        <end position="440"/>
    </location>
</feature>
<feature type="transmembrane region" description="Helical; Name=VII" evidence="2">
    <location>
        <begin position="462"/>
        <end position="484"/>
    </location>
</feature>
<feature type="transmembrane region" description="Helical; Name=VIII" evidence="2">
    <location>
        <begin position="564"/>
        <end position="582"/>
    </location>
</feature>
<feature type="transmembrane region" description="Helical; Name=IX" evidence="2">
    <location>
        <begin position="622"/>
        <end position="643"/>
    </location>
</feature>
<feature type="transmembrane region" description="Helical; Name=X" evidence="2">
    <location>
        <begin position="687"/>
        <end position="709"/>
    </location>
</feature>
<feature type="transmembrane region" description="Helical; Name=XI" evidence="2">
    <location>
        <begin position="747"/>
        <end position="767"/>
    </location>
</feature>
<feature type="region of interest" description="Disordered" evidence="3">
    <location>
        <begin position="1"/>
        <end position="27"/>
    </location>
</feature>
<feature type="binding site" evidence="2">
    <location>
        <position position="606"/>
    </location>
    <ligand>
        <name>[4Fe-4S] cluster</name>
        <dbReference type="ChEBI" id="CHEBI:49883"/>
        <note>ligand shared between dimeric partners</note>
    </ligand>
</feature>
<feature type="binding site" evidence="2">
    <location>
        <position position="615"/>
    </location>
    <ligand>
        <name>[4Fe-4S] cluster</name>
        <dbReference type="ChEBI" id="CHEBI:49883"/>
        <note>ligand shared between dimeric partners</note>
    </ligand>
</feature>
<feature type="binding site" description="axial binding residue" evidence="2">
    <location>
        <position position="698"/>
    </location>
    <ligand>
        <name>divinylchlorophyll a'</name>
        <dbReference type="ChEBI" id="CHEBI:189420"/>
        <label>A1</label>
    </ligand>
    <ligandPart>
        <name>Mg</name>
        <dbReference type="ChEBI" id="CHEBI:25107"/>
    </ligandPart>
</feature>
<feature type="binding site" description="axial binding residue" evidence="2">
    <location>
        <position position="706"/>
    </location>
    <ligand>
        <name>divinyl chlorophyll a</name>
        <dbReference type="ChEBI" id="CHEBI:73095"/>
        <label>A3</label>
    </ligand>
    <ligandPart>
        <name>Mg</name>
        <dbReference type="ChEBI" id="CHEBI:25107"/>
    </ligandPart>
</feature>
<feature type="binding site" evidence="2">
    <location>
        <position position="714"/>
    </location>
    <ligand>
        <name>divinyl chlorophyll a</name>
        <dbReference type="ChEBI" id="CHEBI:73095"/>
        <label>A3</label>
    </ligand>
</feature>
<feature type="binding site" evidence="2">
    <location>
        <position position="715"/>
    </location>
    <ligand>
        <name>phylloquinone</name>
        <dbReference type="ChEBI" id="CHEBI:18067"/>
        <label>A</label>
    </ligand>
</feature>
<feature type="sequence conflict" description="In Ref. 1; CAB64198." evidence="5" ref="1">
    <original>A</original>
    <variation>C</variation>
    <location>
        <position position="252"/>
    </location>
</feature>
<feature type="sequence conflict" description="In Ref. 1; CAB64198." evidence="5" ref="1">
    <original>AGN</original>
    <variation>VVI</variation>
    <location>
        <begin position="529"/>
        <end position="531"/>
    </location>
</feature>
<reference key="1">
    <citation type="journal article" date="2000" name="Photosyn. Res.">
        <title>Rapid evolutionary divergence of photosystem I core subunits PsaA and PsaB in the marine prokaryote Prochlorococcus.</title>
        <authorList>
            <person name="van der Staay G.W.M."/>
            <person name="Moon-van der Staay S.Y."/>
            <person name="Garczarek L."/>
            <person name="Partensky F."/>
        </authorList>
    </citation>
    <scope>NUCLEOTIDE SEQUENCE [GENOMIC DNA]</scope>
    <source>
        <strain>SARG / CCMP1375 / SS120</strain>
    </source>
</reference>
<reference key="2">
    <citation type="journal article" date="2003" name="Proc. Natl. Acad. Sci. U.S.A.">
        <title>Genome sequence of the cyanobacterium Prochlorococcus marinus SS120, a nearly minimal oxyphototrophic genome.</title>
        <authorList>
            <person name="Dufresne A."/>
            <person name="Salanoubat M."/>
            <person name="Partensky F."/>
            <person name="Artiguenave F."/>
            <person name="Axmann I.M."/>
            <person name="Barbe V."/>
            <person name="Duprat S."/>
            <person name="Galperin M.Y."/>
            <person name="Koonin E.V."/>
            <person name="Le Gall F."/>
            <person name="Makarova K.S."/>
            <person name="Ostrowski M."/>
            <person name="Oztas S."/>
            <person name="Robert C."/>
            <person name="Rogozin I.B."/>
            <person name="Scanlan D.J."/>
            <person name="Tandeau de Marsac N."/>
            <person name="Weissenbach J."/>
            <person name="Wincker P."/>
            <person name="Wolf Y.I."/>
            <person name="Hess W.R."/>
        </authorList>
    </citation>
    <scope>NUCLEOTIDE SEQUENCE [LARGE SCALE GENOMIC DNA]</scope>
    <source>
        <strain>SARG / CCMP1375 / SS120</strain>
    </source>
</reference>
<reference key="3">
    <citation type="journal article" date="2003" name="Nature">
        <title>Low-light-adapted Prochlorococcus species possess specific antennae for each photosystem.</title>
        <authorList>
            <person name="Bibby T.S."/>
            <person name="Mary I."/>
            <person name="Nield J."/>
            <person name="Partensky F."/>
            <person name="Barber J."/>
        </authorList>
    </citation>
    <scope>REPRESSION UNDER IRON-STARVATION</scope>
    <source>
        <strain>SARG / CCMP1375 / SS120</strain>
    </source>
</reference>
<evidence type="ECO:0000250" key="1"/>
<evidence type="ECO:0000255" key="2">
    <source>
        <dbReference type="HAMAP-Rule" id="MF_00458"/>
    </source>
</evidence>
<evidence type="ECO:0000256" key="3">
    <source>
        <dbReference type="SAM" id="MobiDB-lite"/>
    </source>
</evidence>
<evidence type="ECO:0000269" key="4">
    <source>
    </source>
</evidence>
<evidence type="ECO:0000305" key="5"/>
<dbReference type="EC" id="1.97.1.12" evidence="2"/>
<dbReference type="EMBL" id="AJ133192">
    <property type="protein sequence ID" value="CAB64198.2"/>
    <property type="molecule type" value="Genomic_DNA"/>
</dbReference>
<dbReference type="EMBL" id="AE017126">
    <property type="protein sequence ID" value="AAQ00716.1"/>
    <property type="molecule type" value="Genomic_DNA"/>
</dbReference>
<dbReference type="RefSeq" id="NP_876063.1">
    <property type="nucleotide sequence ID" value="NC_005042.1"/>
</dbReference>
<dbReference type="RefSeq" id="WP_011125821.1">
    <property type="nucleotide sequence ID" value="NC_005042.1"/>
</dbReference>
<dbReference type="SMR" id="Q9L4N4"/>
<dbReference type="STRING" id="167539.Pro_1672"/>
<dbReference type="EnsemblBacteria" id="AAQ00716">
    <property type="protein sequence ID" value="AAQ00716"/>
    <property type="gene ID" value="Pro_1672"/>
</dbReference>
<dbReference type="KEGG" id="pma:Pro_1672"/>
<dbReference type="PATRIC" id="fig|167539.5.peg.1766"/>
<dbReference type="eggNOG" id="COG2885">
    <property type="taxonomic scope" value="Bacteria"/>
</dbReference>
<dbReference type="HOGENOM" id="CLU_016126_1_0_3"/>
<dbReference type="OrthoDB" id="499313at2"/>
<dbReference type="Proteomes" id="UP000001420">
    <property type="component" value="Chromosome"/>
</dbReference>
<dbReference type="GO" id="GO:0009522">
    <property type="term" value="C:photosystem I"/>
    <property type="evidence" value="ECO:0007669"/>
    <property type="project" value="UniProtKB-KW"/>
</dbReference>
<dbReference type="GO" id="GO:0031676">
    <property type="term" value="C:plasma membrane-derived thylakoid membrane"/>
    <property type="evidence" value="ECO:0007669"/>
    <property type="project" value="UniProtKB-SubCell"/>
</dbReference>
<dbReference type="GO" id="GO:0051539">
    <property type="term" value="F:4 iron, 4 sulfur cluster binding"/>
    <property type="evidence" value="ECO:0007669"/>
    <property type="project" value="UniProtKB-KW"/>
</dbReference>
<dbReference type="GO" id="GO:0016168">
    <property type="term" value="F:chlorophyll binding"/>
    <property type="evidence" value="ECO:0007669"/>
    <property type="project" value="UniProtKB-KW"/>
</dbReference>
<dbReference type="GO" id="GO:0009055">
    <property type="term" value="F:electron transfer activity"/>
    <property type="evidence" value="ECO:0007669"/>
    <property type="project" value="UniProtKB-UniRule"/>
</dbReference>
<dbReference type="GO" id="GO:0000287">
    <property type="term" value="F:magnesium ion binding"/>
    <property type="evidence" value="ECO:0007669"/>
    <property type="project" value="UniProtKB-UniRule"/>
</dbReference>
<dbReference type="GO" id="GO:0016491">
    <property type="term" value="F:oxidoreductase activity"/>
    <property type="evidence" value="ECO:0007669"/>
    <property type="project" value="UniProtKB-KW"/>
</dbReference>
<dbReference type="GO" id="GO:0015979">
    <property type="term" value="P:photosynthesis"/>
    <property type="evidence" value="ECO:0007669"/>
    <property type="project" value="UniProtKB-UniRule"/>
</dbReference>
<dbReference type="Gene3D" id="1.20.1130.10">
    <property type="entry name" value="Photosystem I PsaA/PsaB"/>
    <property type="match status" value="1"/>
</dbReference>
<dbReference type="HAMAP" id="MF_00458">
    <property type="entry name" value="PSI_PsaA"/>
    <property type="match status" value="1"/>
</dbReference>
<dbReference type="InterPro" id="IPR006243">
    <property type="entry name" value="PSI_PsaA"/>
</dbReference>
<dbReference type="InterPro" id="IPR001280">
    <property type="entry name" value="PSI_PsaA/B"/>
</dbReference>
<dbReference type="InterPro" id="IPR020586">
    <property type="entry name" value="PSI_PsaA/B_CS"/>
</dbReference>
<dbReference type="InterPro" id="IPR036408">
    <property type="entry name" value="PSI_PsaA/B_sf"/>
</dbReference>
<dbReference type="NCBIfam" id="TIGR01335">
    <property type="entry name" value="psaA"/>
    <property type="match status" value="1"/>
</dbReference>
<dbReference type="PANTHER" id="PTHR30128">
    <property type="entry name" value="OUTER MEMBRANE PROTEIN, OMPA-RELATED"/>
    <property type="match status" value="1"/>
</dbReference>
<dbReference type="PANTHER" id="PTHR30128:SF19">
    <property type="entry name" value="PHOTOSYSTEM I P700 CHLOROPHYLL A APOPROTEIN A1-RELATED"/>
    <property type="match status" value="1"/>
</dbReference>
<dbReference type="Pfam" id="PF00223">
    <property type="entry name" value="PsaA_PsaB"/>
    <property type="match status" value="1"/>
</dbReference>
<dbReference type="PIRSF" id="PIRSF002905">
    <property type="entry name" value="PSI_A"/>
    <property type="match status" value="1"/>
</dbReference>
<dbReference type="PRINTS" id="PR00257">
    <property type="entry name" value="PHOTSYSPSAAB"/>
</dbReference>
<dbReference type="SUPFAM" id="SSF81558">
    <property type="entry name" value="Photosystem I subunits PsaA/PsaB"/>
    <property type="match status" value="1"/>
</dbReference>
<dbReference type="PROSITE" id="PS00419">
    <property type="entry name" value="PHOTOSYSTEM_I_PSAAB"/>
    <property type="match status" value="1"/>
</dbReference>
<name>PSAA_PROMA</name>
<proteinExistence type="evidence at transcript level"/>